<accession>B3GY64</accession>
<dbReference type="EC" id="1.17.7.3" evidence="1"/>
<dbReference type="EMBL" id="CP001091">
    <property type="protein sequence ID" value="ACE61887.1"/>
    <property type="molecule type" value="Genomic_DNA"/>
</dbReference>
<dbReference type="RefSeq" id="WP_005598113.1">
    <property type="nucleotide sequence ID" value="NC_010939.1"/>
</dbReference>
<dbReference type="SMR" id="B3GY64"/>
<dbReference type="GeneID" id="48599413"/>
<dbReference type="KEGG" id="apa:APP7_1235"/>
<dbReference type="HOGENOM" id="CLU_042258_0_0_6"/>
<dbReference type="UniPathway" id="UPA00056">
    <property type="reaction ID" value="UER00096"/>
</dbReference>
<dbReference type="Proteomes" id="UP000001226">
    <property type="component" value="Chromosome"/>
</dbReference>
<dbReference type="GO" id="GO:0051539">
    <property type="term" value="F:4 iron, 4 sulfur cluster binding"/>
    <property type="evidence" value="ECO:0007669"/>
    <property type="project" value="UniProtKB-UniRule"/>
</dbReference>
<dbReference type="GO" id="GO:0046429">
    <property type="term" value="F:4-hydroxy-3-methylbut-2-en-1-yl diphosphate synthase activity (ferredoxin)"/>
    <property type="evidence" value="ECO:0007669"/>
    <property type="project" value="UniProtKB-UniRule"/>
</dbReference>
<dbReference type="GO" id="GO:0141197">
    <property type="term" value="F:4-hydroxy-3-methylbut-2-enyl-diphosphate synthase activity (flavodoxin)"/>
    <property type="evidence" value="ECO:0007669"/>
    <property type="project" value="UniProtKB-EC"/>
</dbReference>
<dbReference type="GO" id="GO:0005506">
    <property type="term" value="F:iron ion binding"/>
    <property type="evidence" value="ECO:0007669"/>
    <property type="project" value="InterPro"/>
</dbReference>
<dbReference type="GO" id="GO:0019288">
    <property type="term" value="P:isopentenyl diphosphate biosynthetic process, methylerythritol 4-phosphate pathway"/>
    <property type="evidence" value="ECO:0007669"/>
    <property type="project" value="UniProtKB-UniRule"/>
</dbReference>
<dbReference type="GO" id="GO:0016114">
    <property type="term" value="P:terpenoid biosynthetic process"/>
    <property type="evidence" value="ECO:0007669"/>
    <property type="project" value="InterPro"/>
</dbReference>
<dbReference type="FunFam" id="3.20.20.20:FF:000001">
    <property type="entry name" value="4-hydroxy-3-methylbut-2-en-1-yl diphosphate synthase (flavodoxin)"/>
    <property type="match status" value="1"/>
</dbReference>
<dbReference type="Gene3D" id="3.20.20.20">
    <property type="entry name" value="Dihydropteroate synthase-like"/>
    <property type="match status" value="1"/>
</dbReference>
<dbReference type="Gene3D" id="3.30.413.10">
    <property type="entry name" value="Sulfite Reductase Hemoprotein, domain 1"/>
    <property type="match status" value="1"/>
</dbReference>
<dbReference type="HAMAP" id="MF_00159">
    <property type="entry name" value="IspG"/>
    <property type="match status" value="1"/>
</dbReference>
<dbReference type="InterPro" id="IPR011005">
    <property type="entry name" value="Dihydropteroate_synth-like_sf"/>
</dbReference>
<dbReference type="InterPro" id="IPR036849">
    <property type="entry name" value="Enolase-like_C_sf"/>
</dbReference>
<dbReference type="InterPro" id="IPR016425">
    <property type="entry name" value="IspG_bac"/>
</dbReference>
<dbReference type="InterPro" id="IPR004588">
    <property type="entry name" value="IspG_bac-typ"/>
</dbReference>
<dbReference type="InterPro" id="IPR045854">
    <property type="entry name" value="NO2/SO3_Rdtase_4Fe4S_sf"/>
</dbReference>
<dbReference type="NCBIfam" id="TIGR00612">
    <property type="entry name" value="ispG_gcpE"/>
    <property type="match status" value="1"/>
</dbReference>
<dbReference type="NCBIfam" id="NF001540">
    <property type="entry name" value="PRK00366.1"/>
    <property type="match status" value="1"/>
</dbReference>
<dbReference type="PANTHER" id="PTHR30454">
    <property type="entry name" value="4-HYDROXY-3-METHYLBUT-2-EN-1-YL DIPHOSPHATE SYNTHASE"/>
    <property type="match status" value="1"/>
</dbReference>
<dbReference type="PANTHER" id="PTHR30454:SF0">
    <property type="entry name" value="4-HYDROXY-3-METHYLBUT-2-EN-1-YL DIPHOSPHATE SYNTHASE (FERREDOXIN), CHLOROPLASTIC"/>
    <property type="match status" value="1"/>
</dbReference>
<dbReference type="Pfam" id="PF04551">
    <property type="entry name" value="GcpE"/>
    <property type="match status" value="1"/>
</dbReference>
<dbReference type="PIRSF" id="PIRSF004640">
    <property type="entry name" value="IspG"/>
    <property type="match status" value="1"/>
</dbReference>
<dbReference type="SUPFAM" id="SSF51604">
    <property type="entry name" value="Enolase C-terminal domain-like"/>
    <property type="match status" value="1"/>
</dbReference>
<dbReference type="SUPFAM" id="SSF56014">
    <property type="entry name" value="Nitrite and sulphite reductase 4Fe-4S domain-like"/>
    <property type="match status" value="1"/>
</dbReference>
<keyword id="KW-0004">4Fe-4S</keyword>
<keyword id="KW-0408">Iron</keyword>
<keyword id="KW-0411">Iron-sulfur</keyword>
<keyword id="KW-0414">Isoprene biosynthesis</keyword>
<keyword id="KW-0479">Metal-binding</keyword>
<keyword id="KW-0560">Oxidoreductase</keyword>
<proteinExistence type="inferred from homology"/>
<organism>
    <name type="scientific">Actinobacillus pleuropneumoniae serotype 7 (strain AP76)</name>
    <dbReference type="NCBI Taxonomy" id="537457"/>
    <lineage>
        <taxon>Bacteria</taxon>
        <taxon>Pseudomonadati</taxon>
        <taxon>Pseudomonadota</taxon>
        <taxon>Gammaproteobacteria</taxon>
        <taxon>Pasteurellales</taxon>
        <taxon>Pasteurellaceae</taxon>
        <taxon>Actinobacillus</taxon>
    </lineage>
</organism>
<protein>
    <recommendedName>
        <fullName evidence="1">4-hydroxy-3-methylbut-2-en-1-yl diphosphate synthase (flavodoxin)</fullName>
        <ecNumber evidence="1">1.17.7.3</ecNumber>
    </recommendedName>
    <alternativeName>
        <fullName evidence="1">1-hydroxy-2-methyl-2-(E)-butenyl 4-diphosphate synthase</fullName>
    </alternativeName>
</protein>
<gene>
    <name evidence="1" type="primary">ispG</name>
    <name type="ordered locus">APP7_1235</name>
</gene>
<evidence type="ECO:0000255" key="1">
    <source>
        <dbReference type="HAMAP-Rule" id="MF_00159"/>
    </source>
</evidence>
<sequence length="370" mass="40484">MSIHQSPIKRRESKKIWVGNVAVGGDAPISVQSMTNTRTTDVEATVAQIKSLERVGADIVRVSVPTMDAAEAFKVIKQQVNVPLVADIHFDYRIALKVAEYGVDCLRINPGNIGNEERIRAVVDCAKDKNIPIRIGVNAGSLERDLQEKYGEPTPQALLESALRHVDILDRFNFENFKVSVKASDVFLAVESYRLLAKQIVQPLHLGITEAGGARAGSVKSAVGLGLLLSEGIGDTLRISLAADPVEEVKVGFDILKSLRIRSRGINFIACPTCSRQEIDVIATVNALEQRLEDILTPMDVSIIGCVVNGPGEALISDLGVTGSNKMSGFYLDGVRQKERFDNEKLIDQLEAKIRARVAEQHNRIQIEQI</sequence>
<reference key="1">
    <citation type="submission" date="2008-06" db="EMBL/GenBank/DDBJ databases">
        <title>Genome and proteome analysis of A. pleuropneumoniae serotype 7.</title>
        <authorList>
            <person name="Linke B."/>
            <person name="Buettner F."/>
            <person name="Martinez-Arias R."/>
            <person name="Goesmann A."/>
            <person name="Baltes N."/>
            <person name="Tegetmeyer H."/>
            <person name="Singh M."/>
            <person name="Gerlach G.F."/>
        </authorList>
    </citation>
    <scope>NUCLEOTIDE SEQUENCE [LARGE SCALE GENOMIC DNA]</scope>
    <source>
        <strain>AP76</strain>
    </source>
</reference>
<name>ISPG_ACTP7</name>
<feature type="chain" id="PRO_1000097143" description="4-hydroxy-3-methylbut-2-en-1-yl diphosphate synthase (flavodoxin)">
    <location>
        <begin position="1"/>
        <end position="370"/>
    </location>
</feature>
<feature type="binding site" evidence="1">
    <location>
        <position position="271"/>
    </location>
    <ligand>
        <name>[4Fe-4S] cluster</name>
        <dbReference type="ChEBI" id="CHEBI:49883"/>
    </ligand>
</feature>
<feature type="binding site" evidence="1">
    <location>
        <position position="274"/>
    </location>
    <ligand>
        <name>[4Fe-4S] cluster</name>
        <dbReference type="ChEBI" id="CHEBI:49883"/>
    </ligand>
</feature>
<feature type="binding site" evidence="1">
    <location>
        <position position="306"/>
    </location>
    <ligand>
        <name>[4Fe-4S] cluster</name>
        <dbReference type="ChEBI" id="CHEBI:49883"/>
    </ligand>
</feature>
<feature type="binding site" evidence="1">
    <location>
        <position position="313"/>
    </location>
    <ligand>
        <name>[4Fe-4S] cluster</name>
        <dbReference type="ChEBI" id="CHEBI:49883"/>
    </ligand>
</feature>
<comment type="function">
    <text evidence="1">Converts 2C-methyl-D-erythritol 2,4-cyclodiphosphate (ME-2,4cPP) into 1-hydroxy-2-methyl-2-(E)-butenyl 4-diphosphate.</text>
</comment>
<comment type="catalytic activity">
    <reaction evidence="1">
        <text>(2E)-4-hydroxy-3-methylbut-2-enyl diphosphate + oxidized [flavodoxin] + H2O + 2 H(+) = 2-C-methyl-D-erythritol 2,4-cyclic diphosphate + reduced [flavodoxin]</text>
        <dbReference type="Rhea" id="RHEA:43604"/>
        <dbReference type="Rhea" id="RHEA-COMP:10622"/>
        <dbReference type="Rhea" id="RHEA-COMP:10623"/>
        <dbReference type="ChEBI" id="CHEBI:15377"/>
        <dbReference type="ChEBI" id="CHEBI:15378"/>
        <dbReference type="ChEBI" id="CHEBI:57618"/>
        <dbReference type="ChEBI" id="CHEBI:58210"/>
        <dbReference type="ChEBI" id="CHEBI:58483"/>
        <dbReference type="ChEBI" id="CHEBI:128753"/>
        <dbReference type="EC" id="1.17.7.3"/>
    </reaction>
</comment>
<comment type="cofactor">
    <cofactor evidence="1">
        <name>[4Fe-4S] cluster</name>
        <dbReference type="ChEBI" id="CHEBI:49883"/>
    </cofactor>
    <text evidence="1">Binds 1 [4Fe-4S] cluster.</text>
</comment>
<comment type="pathway">
    <text evidence="1">Isoprenoid biosynthesis; isopentenyl diphosphate biosynthesis via DXP pathway; isopentenyl diphosphate from 1-deoxy-D-xylulose 5-phosphate: step 5/6.</text>
</comment>
<comment type="similarity">
    <text evidence="1">Belongs to the IspG family.</text>
</comment>